<comment type="catalytic activity">
    <reaction evidence="1">
        <text>L-homoserine + ATP = O-phospho-L-homoserine + ADP + H(+)</text>
        <dbReference type="Rhea" id="RHEA:13985"/>
        <dbReference type="ChEBI" id="CHEBI:15378"/>
        <dbReference type="ChEBI" id="CHEBI:30616"/>
        <dbReference type="ChEBI" id="CHEBI:57476"/>
        <dbReference type="ChEBI" id="CHEBI:57590"/>
        <dbReference type="ChEBI" id="CHEBI:456216"/>
        <dbReference type="EC" id="2.7.1.39"/>
    </reaction>
</comment>
<comment type="pathway">
    <text evidence="1">Amino-acid biosynthesis; L-threonine biosynthesis; L-threonine from L-aspartate: step 4/5.</text>
</comment>
<comment type="similarity">
    <text evidence="1">Belongs to the pseudomonas-type ThrB family.</text>
</comment>
<accession>A1VMB2</accession>
<reference key="1">
    <citation type="journal article" date="2009" name="Environ. Microbiol.">
        <title>The genome of Polaromonas naphthalenivorans strain CJ2, isolated from coal tar-contaminated sediment, reveals physiological and metabolic versatility and evolution through extensive horizontal gene transfer.</title>
        <authorList>
            <person name="Yagi J.M."/>
            <person name="Sims D."/>
            <person name="Brettin T."/>
            <person name="Bruce D."/>
            <person name="Madsen E.L."/>
        </authorList>
    </citation>
    <scope>NUCLEOTIDE SEQUENCE [LARGE SCALE GENOMIC DNA]</scope>
    <source>
        <strain>CJ2</strain>
    </source>
</reference>
<proteinExistence type="inferred from homology"/>
<name>KHSE_POLNA</name>
<sequence>MAVFTEVSFDEAAAFLRFLNLGQLQNIKGAAGGIENTNYFVDTDQGQYVLTLFERLTFEQLPFYLHLMKHLATRGIPVPDPVADAKGNILHRLKGKPAAVVNKLRGHSELAPTPLHCAGVGEMLARLHLAGLDYERQQPNLRGLAWWNETVPVVLPYLTEEQRSLILGELAYQNHIAASSGYRSLPRGAIHADLFRDNVMFENGQLTGFFDFYFAGCDTFLYDIGICLNDWCIDLESGRLDTTRADAFMAAYQTVRPLTAQERTLLPALQRAGAFRFWLSRLWDFHLPRDAAMLKPHDPGHFERVLRERLAHPYLL</sequence>
<evidence type="ECO:0000255" key="1">
    <source>
        <dbReference type="HAMAP-Rule" id="MF_00301"/>
    </source>
</evidence>
<organism>
    <name type="scientific">Polaromonas naphthalenivorans (strain CJ2)</name>
    <dbReference type="NCBI Taxonomy" id="365044"/>
    <lineage>
        <taxon>Bacteria</taxon>
        <taxon>Pseudomonadati</taxon>
        <taxon>Pseudomonadota</taxon>
        <taxon>Betaproteobacteria</taxon>
        <taxon>Burkholderiales</taxon>
        <taxon>Comamonadaceae</taxon>
        <taxon>Polaromonas</taxon>
    </lineage>
</organism>
<keyword id="KW-0028">Amino-acid biosynthesis</keyword>
<keyword id="KW-0067">ATP-binding</keyword>
<keyword id="KW-0418">Kinase</keyword>
<keyword id="KW-0547">Nucleotide-binding</keyword>
<keyword id="KW-1185">Reference proteome</keyword>
<keyword id="KW-0791">Threonine biosynthesis</keyword>
<keyword id="KW-0808">Transferase</keyword>
<feature type="chain" id="PRO_1000022588" description="Homoserine kinase">
    <location>
        <begin position="1"/>
        <end position="316"/>
    </location>
</feature>
<protein>
    <recommendedName>
        <fullName evidence="1">Homoserine kinase</fullName>
        <shortName evidence="1">HK</shortName>
        <shortName evidence="1">HSK</shortName>
        <ecNumber evidence="1">2.7.1.39</ecNumber>
    </recommendedName>
</protein>
<gene>
    <name evidence="1" type="primary">thrB</name>
    <name type="ordered locus">Pnap_1476</name>
</gene>
<dbReference type="EC" id="2.7.1.39" evidence="1"/>
<dbReference type="EMBL" id="CP000529">
    <property type="protein sequence ID" value="ABM36790.1"/>
    <property type="molecule type" value="Genomic_DNA"/>
</dbReference>
<dbReference type="RefSeq" id="WP_011800877.1">
    <property type="nucleotide sequence ID" value="NC_008781.1"/>
</dbReference>
<dbReference type="SMR" id="A1VMB2"/>
<dbReference type="STRING" id="365044.Pnap_1476"/>
<dbReference type="KEGG" id="pna:Pnap_1476"/>
<dbReference type="eggNOG" id="COG2334">
    <property type="taxonomic scope" value="Bacteria"/>
</dbReference>
<dbReference type="HOGENOM" id="CLU_053300_0_0_4"/>
<dbReference type="OrthoDB" id="9777460at2"/>
<dbReference type="UniPathway" id="UPA00050">
    <property type="reaction ID" value="UER00064"/>
</dbReference>
<dbReference type="Proteomes" id="UP000000644">
    <property type="component" value="Chromosome"/>
</dbReference>
<dbReference type="GO" id="GO:0005524">
    <property type="term" value="F:ATP binding"/>
    <property type="evidence" value="ECO:0007669"/>
    <property type="project" value="UniProtKB-KW"/>
</dbReference>
<dbReference type="GO" id="GO:0004413">
    <property type="term" value="F:homoserine kinase activity"/>
    <property type="evidence" value="ECO:0007669"/>
    <property type="project" value="UniProtKB-UniRule"/>
</dbReference>
<dbReference type="GO" id="GO:0009088">
    <property type="term" value="P:threonine biosynthetic process"/>
    <property type="evidence" value="ECO:0007669"/>
    <property type="project" value="UniProtKB-UniRule"/>
</dbReference>
<dbReference type="CDD" id="cd05153">
    <property type="entry name" value="HomoserineK_II"/>
    <property type="match status" value="1"/>
</dbReference>
<dbReference type="Gene3D" id="3.90.1200.10">
    <property type="match status" value="1"/>
</dbReference>
<dbReference type="Gene3D" id="3.30.200.20">
    <property type="entry name" value="Phosphorylase Kinase, domain 1"/>
    <property type="match status" value="1"/>
</dbReference>
<dbReference type="HAMAP" id="MF_00301">
    <property type="entry name" value="Homoser_kinase_2"/>
    <property type="match status" value="1"/>
</dbReference>
<dbReference type="InterPro" id="IPR002575">
    <property type="entry name" value="Aminoglycoside_PTrfase"/>
</dbReference>
<dbReference type="InterPro" id="IPR005280">
    <property type="entry name" value="Homoserine_kinase_II"/>
</dbReference>
<dbReference type="InterPro" id="IPR011009">
    <property type="entry name" value="Kinase-like_dom_sf"/>
</dbReference>
<dbReference type="InterPro" id="IPR050249">
    <property type="entry name" value="Pseudomonas-type_ThrB"/>
</dbReference>
<dbReference type="NCBIfam" id="NF003558">
    <property type="entry name" value="PRK05231.1"/>
    <property type="match status" value="1"/>
</dbReference>
<dbReference type="NCBIfam" id="TIGR00938">
    <property type="entry name" value="thrB_alt"/>
    <property type="match status" value="1"/>
</dbReference>
<dbReference type="PANTHER" id="PTHR21064:SF6">
    <property type="entry name" value="AMINOGLYCOSIDE PHOSPHOTRANSFERASE DOMAIN-CONTAINING PROTEIN"/>
    <property type="match status" value="1"/>
</dbReference>
<dbReference type="PANTHER" id="PTHR21064">
    <property type="entry name" value="AMINOGLYCOSIDE PHOSPHOTRANSFERASE DOMAIN-CONTAINING PROTEIN-RELATED"/>
    <property type="match status" value="1"/>
</dbReference>
<dbReference type="Pfam" id="PF01636">
    <property type="entry name" value="APH"/>
    <property type="match status" value="1"/>
</dbReference>
<dbReference type="SUPFAM" id="SSF56112">
    <property type="entry name" value="Protein kinase-like (PK-like)"/>
    <property type="match status" value="1"/>
</dbReference>